<name>URE2_POLSJ</name>
<keyword id="KW-0963">Cytoplasm</keyword>
<keyword id="KW-0378">Hydrolase</keyword>
<keyword id="KW-1185">Reference proteome</keyword>
<evidence type="ECO:0000255" key="1">
    <source>
        <dbReference type="HAMAP-Rule" id="MF_01954"/>
    </source>
</evidence>
<organism>
    <name type="scientific">Polaromonas sp. (strain JS666 / ATCC BAA-500)</name>
    <dbReference type="NCBI Taxonomy" id="296591"/>
    <lineage>
        <taxon>Bacteria</taxon>
        <taxon>Pseudomonadati</taxon>
        <taxon>Pseudomonadota</taxon>
        <taxon>Betaproteobacteria</taxon>
        <taxon>Burkholderiales</taxon>
        <taxon>Comamonadaceae</taxon>
        <taxon>Polaromonas</taxon>
    </lineage>
</organism>
<proteinExistence type="inferred from homology"/>
<reference key="1">
    <citation type="journal article" date="2008" name="Appl. Environ. Microbiol.">
        <title>The genome of Polaromonas sp. strain JS666: insights into the evolution of a hydrocarbon- and xenobiotic-degrading bacterium, and features of relevance to biotechnology.</title>
        <authorList>
            <person name="Mattes T.E."/>
            <person name="Alexander A.K."/>
            <person name="Richardson P.M."/>
            <person name="Munk A.C."/>
            <person name="Han C.S."/>
            <person name="Stothard P."/>
            <person name="Coleman N.V."/>
        </authorList>
    </citation>
    <scope>NUCLEOTIDE SEQUENCE [LARGE SCALE GENOMIC DNA]</scope>
    <source>
        <strain>JS666 / ATCC BAA-500</strain>
    </source>
</reference>
<accession>Q12DU2</accession>
<comment type="catalytic activity">
    <reaction evidence="1">
        <text>urea + 2 H2O + H(+) = hydrogencarbonate + 2 NH4(+)</text>
        <dbReference type="Rhea" id="RHEA:20557"/>
        <dbReference type="ChEBI" id="CHEBI:15377"/>
        <dbReference type="ChEBI" id="CHEBI:15378"/>
        <dbReference type="ChEBI" id="CHEBI:16199"/>
        <dbReference type="ChEBI" id="CHEBI:17544"/>
        <dbReference type="ChEBI" id="CHEBI:28938"/>
        <dbReference type="EC" id="3.5.1.5"/>
    </reaction>
</comment>
<comment type="pathway">
    <text evidence="1">Nitrogen metabolism; urea degradation; CO(2) and NH(3) from urea (urease route): step 1/1.</text>
</comment>
<comment type="subunit">
    <text evidence="1">Heterotrimer of UreA (gamma), UreB (beta) and UreC (alpha) subunits. Three heterotrimers associate to form the active enzyme.</text>
</comment>
<comment type="subcellular location">
    <subcellularLocation>
        <location evidence="1">Cytoplasm</location>
    </subcellularLocation>
</comment>
<comment type="similarity">
    <text evidence="1">Belongs to the urease beta subunit family.</text>
</comment>
<sequence>MTPGELFTDGPDHVLNAGRRTLTLVVQNTADRPIQVGSHYHFAETNAALGFDRQAAHGMRLNIASGTAVRFEPGQQRTVELVDYAGERKVFGFRGLVQGGLDASGQSHKETT</sequence>
<protein>
    <recommendedName>
        <fullName evidence="1">Urease subunit beta</fullName>
        <ecNumber evidence="1">3.5.1.5</ecNumber>
    </recommendedName>
    <alternativeName>
        <fullName evidence="1">Urea amidohydrolase subunit beta</fullName>
    </alternativeName>
</protein>
<feature type="chain" id="PRO_1000070752" description="Urease subunit beta">
    <location>
        <begin position="1"/>
        <end position="112"/>
    </location>
</feature>
<dbReference type="EC" id="3.5.1.5" evidence="1"/>
<dbReference type="EMBL" id="CP000316">
    <property type="protein sequence ID" value="ABE43300.1"/>
    <property type="molecule type" value="Genomic_DNA"/>
</dbReference>
<dbReference type="RefSeq" id="WP_011482299.1">
    <property type="nucleotide sequence ID" value="NC_007948.1"/>
</dbReference>
<dbReference type="SMR" id="Q12DU2"/>
<dbReference type="STRING" id="296591.Bpro_1351"/>
<dbReference type="KEGG" id="pol:Bpro_1351"/>
<dbReference type="eggNOG" id="COG0832">
    <property type="taxonomic scope" value="Bacteria"/>
</dbReference>
<dbReference type="HOGENOM" id="CLU_129707_1_1_4"/>
<dbReference type="OrthoDB" id="9797217at2"/>
<dbReference type="UniPathway" id="UPA00258">
    <property type="reaction ID" value="UER00370"/>
</dbReference>
<dbReference type="Proteomes" id="UP000001983">
    <property type="component" value="Chromosome"/>
</dbReference>
<dbReference type="GO" id="GO:0035550">
    <property type="term" value="C:urease complex"/>
    <property type="evidence" value="ECO:0007669"/>
    <property type="project" value="InterPro"/>
</dbReference>
<dbReference type="GO" id="GO:0009039">
    <property type="term" value="F:urease activity"/>
    <property type="evidence" value="ECO:0007669"/>
    <property type="project" value="UniProtKB-UniRule"/>
</dbReference>
<dbReference type="GO" id="GO:0043419">
    <property type="term" value="P:urea catabolic process"/>
    <property type="evidence" value="ECO:0007669"/>
    <property type="project" value="UniProtKB-UniRule"/>
</dbReference>
<dbReference type="CDD" id="cd00407">
    <property type="entry name" value="Urease_beta"/>
    <property type="match status" value="1"/>
</dbReference>
<dbReference type="FunFam" id="2.10.150.10:FF:000001">
    <property type="entry name" value="Urease subunit beta"/>
    <property type="match status" value="1"/>
</dbReference>
<dbReference type="Gene3D" id="2.10.150.10">
    <property type="entry name" value="Urease, beta subunit"/>
    <property type="match status" value="1"/>
</dbReference>
<dbReference type="HAMAP" id="MF_01954">
    <property type="entry name" value="Urease_beta"/>
    <property type="match status" value="1"/>
</dbReference>
<dbReference type="InterPro" id="IPR002019">
    <property type="entry name" value="Urease_beta-like"/>
</dbReference>
<dbReference type="InterPro" id="IPR036461">
    <property type="entry name" value="Urease_betasu_sf"/>
</dbReference>
<dbReference type="InterPro" id="IPR050069">
    <property type="entry name" value="Urease_subunit"/>
</dbReference>
<dbReference type="NCBIfam" id="NF009682">
    <property type="entry name" value="PRK13203.1"/>
    <property type="match status" value="1"/>
</dbReference>
<dbReference type="NCBIfam" id="TIGR00192">
    <property type="entry name" value="urease_beta"/>
    <property type="match status" value="1"/>
</dbReference>
<dbReference type="PANTHER" id="PTHR33569">
    <property type="entry name" value="UREASE"/>
    <property type="match status" value="1"/>
</dbReference>
<dbReference type="PANTHER" id="PTHR33569:SF1">
    <property type="entry name" value="UREASE"/>
    <property type="match status" value="1"/>
</dbReference>
<dbReference type="Pfam" id="PF00699">
    <property type="entry name" value="Urease_beta"/>
    <property type="match status" value="1"/>
</dbReference>
<dbReference type="SUPFAM" id="SSF51278">
    <property type="entry name" value="Urease, beta-subunit"/>
    <property type="match status" value="1"/>
</dbReference>
<gene>
    <name evidence="1" type="primary">ureB</name>
    <name type="ordered locus">Bpro_1351</name>
</gene>